<protein>
    <recommendedName>
        <fullName evidence="1">Ribosome-binding factor A</fullName>
    </recommendedName>
</protein>
<reference key="1">
    <citation type="journal article" date="2003" name="Nature">
        <title>The genome sequence of Bacillus anthracis Ames and comparison to closely related bacteria.</title>
        <authorList>
            <person name="Read T.D."/>
            <person name="Peterson S.N."/>
            <person name="Tourasse N.J."/>
            <person name="Baillie L.W."/>
            <person name="Paulsen I.T."/>
            <person name="Nelson K.E."/>
            <person name="Tettelin H."/>
            <person name="Fouts D.E."/>
            <person name="Eisen J.A."/>
            <person name="Gill S.R."/>
            <person name="Holtzapple E.K."/>
            <person name="Okstad O.A."/>
            <person name="Helgason E."/>
            <person name="Rilstone J."/>
            <person name="Wu M."/>
            <person name="Kolonay J.F."/>
            <person name="Beanan M.J."/>
            <person name="Dodson R.J."/>
            <person name="Brinkac L.M."/>
            <person name="Gwinn M.L."/>
            <person name="DeBoy R.T."/>
            <person name="Madpu R."/>
            <person name="Daugherty S.C."/>
            <person name="Durkin A.S."/>
            <person name="Haft D.H."/>
            <person name="Nelson W.C."/>
            <person name="Peterson J.D."/>
            <person name="Pop M."/>
            <person name="Khouri H.M."/>
            <person name="Radune D."/>
            <person name="Benton J.L."/>
            <person name="Mahamoud Y."/>
            <person name="Jiang L."/>
            <person name="Hance I.R."/>
            <person name="Weidman J.F."/>
            <person name="Berry K.J."/>
            <person name="Plaut R.D."/>
            <person name="Wolf A.M."/>
            <person name="Watkins K.L."/>
            <person name="Nierman W.C."/>
            <person name="Hazen A."/>
            <person name="Cline R.T."/>
            <person name="Redmond C."/>
            <person name="Thwaite J.E."/>
            <person name="White O."/>
            <person name="Salzberg S.L."/>
            <person name="Thomason B."/>
            <person name="Friedlander A.M."/>
            <person name="Koehler T.M."/>
            <person name="Hanna P.C."/>
            <person name="Kolstoe A.-B."/>
            <person name="Fraser C.M."/>
        </authorList>
    </citation>
    <scope>NUCLEOTIDE SEQUENCE [LARGE SCALE GENOMIC DNA]</scope>
    <source>
        <strain>Ames / isolate Porton</strain>
    </source>
</reference>
<reference key="2">
    <citation type="journal article" date="2009" name="J. Bacteriol.">
        <title>The complete genome sequence of Bacillus anthracis Ames 'Ancestor'.</title>
        <authorList>
            <person name="Ravel J."/>
            <person name="Jiang L."/>
            <person name="Stanley S.T."/>
            <person name="Wilson M.R."/>
            <person name="Decker R.S."/>
            <person name="Read T.D."/>
            <person name="Worsham P."/>
            <person name="Keim P.S."/>
            <person name="Salzberg S.L."/>
            <person name="Fraser-Liggett C.M."/>
            <person name="Rasko D.A."/>
        </authorList>
    </citation>
    <scope>NUCLEOTIDE SEQUENCE [LARGE SCALE GENOMIC DNA]</scope>
    <source>
        <strain>Ames ancestor</strain>
    </source>
</reference>
<reference key="3">
    <citation type="submission" date="2004-01" db="EMBL/GenBank/DDBJ databases">
        <title>Complete genome sequence of Bacillus anthracis Sterne.</title>
        <authorList>
            <person name="Brettin T.S."/>
            <person name="Bruce D."/>
            <person name="Challacombe J.F."/>
            <person name="Gilna P."/>
            <person name="Han C."/>
            <person name="Hill K."/>
            <person name="Hitchcock P."/>
            <person name="Jackson P."/>
            <person name="Keim P."/>
            <person name="Longmire J."/>
            <person name="Lucas S."/>
            <person name="Okinaka R."/>
            <person name="Richardson P."/>
            <person name="Rubin E."/>
            <person name="Tice H."/>
        </authorList>
    </citation>
    <scope>NUCLEOTIDE SEQUENCE [LARGE SCALE GENOMIC DNA]</scope>
    <source>
        <strain>Sterne</strain>
    </source>
</reference>
<organism>
    <name type="scientific">Bacillus anthracis</name>
    <dbReference type="NCBI Taxonomy" id="1392"/>
    <lineage>
        <taxon>Bacteria</taxon>
        <taxon>Bacillati</taxon>
        <taxon>Bacillota</taxon>
        <taxon>Bacilli</taxon>
        <taxon>Bacillales</taxon>
        <taxon>Bacillaceae</taxon>
        <taxon>Bacillus</taxon>
        <taxon>Bacillus cereus group</taxon>
    </lineage>
</organism>
<feature type="chain" id="PRO_0000102613" description="Ribosome-binding factor A">
    <location>
        <begin position="1"/>
        <end position="118"/>
    </location>
</feature>
<keyword id="KW-0963">Cytoplasm</keyword>
<keyword id="KW-1185">Reference proteome</keyword>
<keyword id="KW-0690">Ribosome biogenesis</keyword>
<proteinExistence type="inferred from homology"/>
<sequence>MKLRANRVGEQMKKELGDIISRKIKDPRVGFVTVTDVQVSRDLQIATVYISVLGDEEQKENTLKGLAKAKGFIRSEIGQRIRLRKTPEISFEFDESIGYGHRIDTLLHEINKEGKREE</sequence>
<evidence type="ECO:0000255" key="1">
    <source>
        <dbReference type="HAMAP-Rule" id="MF_00003"/>
    </source>
</evidence>
<gene>
    <name evidence="1" type="primary">rbfA</name>
    <name type="ordered locus">BA_3948</name>
    <name type="ordered locus">GBAA_3948</name>
    <name type="ordered locus">BAS3662</name>
</gene>
<accession>Q81WM5</accession>
<accession>Q6HUS5</accession>
<accession>Q6KP07</accession>
<comment type="function">
    <text evidence="1">One of several proteins that assist in the late maturation steps of the functional core of the 30S ribosomal subunit. Associates with free 30S ribosomal subunits (but not with 30S subunits that are part of 70S ribosomes or polysomes). Required for efficient processing of 16S rRNA. May interact with the 5'-terminal helix region of 16S rRNA.</text>
</comment>
<comment type="subunit">
    <text evidence="1">Monomer. Binds 30S ribosomal subunits, but not 50S ribosomal subunits or 70S ribosomes.</text>
</comment>
<comment type="subcellular location">
    <subcellularLocation>
        <location evidence="1">Cytoplasm</location>
    </subcellularLocation>
</comment>
<comment type="similarity">
    <text evidence="1">Belongs to the RbfA family.</text>
</comment>
<dbReference type="EMBL" id="AE016879">
    <property type="protein sequence ID" value="AAP27677.1"/>
    <property type="molecule type" value="Genomic_DNA"/>
</dbReference>
<dbReference type="EMBL" id="AE017334">
    <property type="protein sequence ID" value="AAT33062.1"/>
    <property type="molecule type" value="Genomic_DNA"/>
</dbReference>
<dbReference type="EMBL" id="AE017225">
    <property type="protein sequence ID" value="AAT55964.1"/>
    <property type="molecule type" value="Genomic_DNA"/>
</dbReference>
<dbReference type="RefSeq" id="NP_846191.1">
    <property type="nucleotide sequence ID" value="NC_003997.3"/>
</dbReference>
<dbReference type="RefSeq" id="WP_000776446.1">
    <property type="nucleotide sequence ID" value="NZ_WXXJ01000026.1"/>
</dbReference>
<dbReference type="RefSeq" id="YP_029913.1">
    <property type="nucleotide sequence ID" value="NC_005945.1"/>
</dbReference>
<dbReference type="SMR" id="Q81WM5"/>
<dbReference type="STRING" id="261594.GBAA_3948"/>
<dbReference type="DNASU" id="1087561"/>
<dbReference type="GeneID" id="45023639"/>
<dbReference type="KEGG" id="ban:BA_3948"/>
<dbReference type="KEGG" id="bar:GBAA_3948"/>
<dbReference type="KEGG" id="bat:BAS3662"/>
<dbReference type="PATRIC" id="fig|198094.11.peg.3918"/>
<dbReference type="eggNOG" id="COG0858">
    <property type="taxonomic scope" value="Bacteria"/>
</dbReference>
<dbReference type="HOGENOM" id="CLU_089475_6_3_9"/>
<dbReference type="OMA" id="QHAKIFV"/>
<dbReference type="OrthoDB" id="307788at2"/>
<dbReference type="Proteomes" id="UP000000427">
    <property type="component" value="Chromosome"/>
</dbReference>
<dbReference type="Proteomes" id="UP000000594">
    <property type="component" value="Chromosome"/>
</dbReference>
<dbReference type="GO" id="GO:0005829">
    <property type="term" value="C:cytosol"/>
    <property type="evidence" value="ECO:0007669"/>
    <property type="project" value="TreeGrafter"/>
</dbReference>
<dbReference type="GO" id="GO:0043024">
    <property type="term" value="F:ribosomal small subunit binding"/>
    <property type="evidence" value="ECO:0007669"/>
    <property type="project" value="TreeGrafter"/>
</dbReference>
<dbReference type="GO" id="GO:0030490">
    <property type="term" value="P:maturation of SSU-rRNA"/>
    <property type="evidence" value="ECO:0007669"/>
    <property type="project" value="UniProtKB-UniRule"/>
</dbReference>
<dbReference type="FunFam" id="3.30.300.20:FF:000009">
    <property type="entry name" value="Ribosome-binding factor A"/>
    <property type="match status" value="1"/>
</dbReference>
<dbReference type="Gene3D" id="3.30.300.20">
    <property type="match status" value="1"/>
</dbReference>
<dbReference type="HAMAP" id="MF_00003">
    <property type="entry name" value="RbfA"/>
    <property type="match status" value="1"/>
</dbReference>
<dbReference type="InterPro" id="IPR015946">
    <property type="entry name" value="KH_dom-like_a/b"/>
</dbReference>
<dbReference type="InterPro" id="IPR000238">
    <property type="entry name" value="RbfA"/>
</dbReference>
<dbReference type="InterPro" id="IPR023799">
    <property type="entry name" value="RbfA_dom_sf"/>
</dbReference>
<dbReference type="InterPro" id="IPR020053">
    <property type="entry name" value="Ribosome-bd_factorA_CS"/>
</dbReference>
<dbReference type="NCBIfam" id="TIGR00082">
    <property type="entry name" value="rbfA"/>
    <property type="match status" value="1"/>
</dbReference>
<dbReference type="PANTHER" id="PTHR33515">
    <property type="entry name" value="RIBOSOME-BINDING FACTOR A, CHLOROPLASTIC-RELATED"/>
    <property type="match status" value="1"/>
</dbReference>
<dbReference type="PANTHER" id="PTHR33515:SF1">
    <property type="entry name" value="RIBOSOME-BINDING FACTOR A, CHLOROPLASTIC-RELATED"/>
    <property type="match status" value="1"/>
</dbReference>
<dbReference type="Pfam" id="PF02033">
    <property type="entry name" value="RBFA"/>
    <property type="match status" value="1"/>
</dbReference>
<dbReference type="SUPFAM" id="SSF89919">
    <property type="entry name" value="Ribosome-binding factor A, RbfA"/>
    <property type="match status" value="1"/>
</dbReference>
<dbReference type="PROSITE" id="PS01319">
    <property type="entry name" value="RBFA"/>
    <property type="match status" value="1"/>
</dbReference>
<name>RBFA_BACAN</name>